<dbReference type="EC" id="2.3.1.46" evidence="1"/>
<dbReference type="EMBL" id="CP000826">
    <property type="protein sequence ID" value="ABV43598.1"/>
    <property type="molecule type" value="Genomic_DNA"/>
</dbReference>
<dbReference type="SMR" id="A8GKF8"/>
<dbReference type="STRING" id="399741.Spro_4504"/>
<dbReference type="KEGG" id="spe:Spro_4504"/>
<dbReference type="eggNOG" id="COG1897">
    <property type="taxonomic scope" value="Bacteria"/>
</dbReference>
<dbReference type="HOGENOM" id="CLU_057851_0_1_6"/>
<dbReference type="OrthoDB" id="9772423at2"/>
<dbReference type="UniPathway" id="UPA00051">
    <property type="reaction ID" value="UER00075"/>
</dbReference>
<dbReference type="GO" id="GO:0005737">
    <property type="term" value="C:cytoplasm"/>
    <property type="evidence" value="ECO:0007669"/>
    <property type="project" value="UniProtKB-SubCell"/>
</dbReference>
<dbReference type="GO" id="GO:0004414">
    <property type="term" value="F:homoserine O-acetyltransferase activity"/>
    <property type="evidence" value="ECO:0007669"/>
    <property type="project" value="UniProtKB-UniRule"/>
</dbReference>
<dbReference type="GO" id="GO:0008899">
    <property type="term" value="F:homoserine O-succinyltransferase activity"/>
    <property type="evidence" value="ECO:0007669"/>
    <property type="project" value="UniProtKB-EC"/>
</dbReference>
<dbReference type="GO" id="GO:0019281">
    <property type="term" value="P:L-methionine biosynthetic process from homoserine via O-succinyl-L-homoserine and cystathionine"/>
    <property type="evidence" value="ECO:0007669"/>
    <property type="project" value="InterPro"/>
</dbReference>
<dbReference type="CDD" id="cd03131">
    <property type="entry name" value="GATase1_HTS"/>
    <property type="match status" value="1"/>
</dbReference>
<dbReference type="FunFam" id="3.40.50.880:FF:000004">
    <property type="entry name" value="Homoserine O-succinyltransferase"/>
    <property type="match status" value="1"/>
</dbReference>
<dbReference type="Gene3D" id="3.40.50.880">
    <property type="match status" value="1"/>
</dbReference>
<dbReference type="HAMAP" id="MF_00295">
    <property type="entry name" value="MetA_acyltransf"/>
    <property type="match status" value="1"/>
</dbReference>
<dbReference type="InterPro" id="IPR029062">
    <property type="entry name" value="Class_I_gatase-like"/>
</dbReference>
<dbReference type="InterPro" id="IPR005697">
    <property type="entry name" value="HST_MetA"/>
</dbReference>
<dbReference type="InterPro" id="IPR033752">
    <property type="entry name" value="MetA_family"/>
</dbReference>
<dbReference type="NCBIfam" id="TIGR01001">
    <property type="entry name" value="metA"/>
    <property type="match status" value="1"/>
</dbReference>
<dbReference type="PANTHER" id="PTHR20919">
    <property type="entry name" value="HOMOSERINE O-SUCCINYLTRANSFERASE"/>
    <property type="match status" value="1"/>
</dbReference>
<dbReference type="PANTHER" id="PTHR20919:SF0">
    <property type="entry name" value="HOMOSERINE O-SUCCINYLTRANSFERASE"/>
    <property type="match status" value="1"/>
</dbReference>
<dbReference type="Pfam" id="PF04204">
    <property type="entry name" value="HTS"/>
    <property type="match status" value="1"/>
</dbReference>
<dbReference type="PIRSF" id="PIRSF000450">
    <property type="entry name" value="H_ser_succinyltr"/>
    <property type="match status" value="1"/>
</dbReference>
<dbReference type="SUPFAM" id="SSF52317">
    <property type="entry name" value="Class I glutamine amidotransferase-like"/>
    <property type="match status" value="1"/>
</dbReference>
<sequence length="309" mass="35551">MPIRVPDELPAVSFLRNENVFVMASSRAKTQEIRPLKVLILNLMPKKIETENQFLRLLSNSPLQIDIQLLRIDSRESKNTPAEHLNNFYCDFEDIQDENFDGLIVTGAPLGLVDFCDVAYWPQIERVIDWAKNHVTSTLFVCWAVQAALNILYGIPKMTREVKLSGVYQHQTLQQHALLTRGFDETFLAPHSRYADFPTEIIRQYTDLDILAESEQTGAYLFASKDKRLAFVTGHPEYDALTLAGEYCRDNDAGLNPVVPLNYFPDDNPELTPKASWRSHGHLLFANWLNYYVYQITPYDLRHMNPTLE</sequence>
<feature type="chain" id="PRO_1000059293" description="Homoserine O-succinyltransferase">
    <location>
        <begin position="1"/>
        <end position="309"/>
    </location>
</feature>
<feature type="active site" description="Acyl-thioester intermediate" evidence="1">
    <location>
        <position position="142"/>
    </location>
</feature>
<feature type="active site" description="Proton acceptor" evidence="1">
    <location>
        <position position="235"/>
    </location>
</feature>
<feature type="active site" evidence="1">
    <location>
        <position position="237"/>
    </location>
</feature>
<feature type="binding site" evidence="1">
    <location>
        <position position="163"/>
    </location>
    <ligand>
        <name>substrate</name>
    </ligand>
</feature>
<feature type="binding site" evidence="1">
    <location>
        <position position="192"/>
    </location>
    <ligand>
        <name>substrate</name>
    </ligand>
</feature>
<feature type="binding site" evidence="1">
    <location>
        <position position="249"/>
    </location>
    <ligand>
        <name>substrate</name>
    </ligand>
</feature>
<feature type="site" description="Important for acyl-CoA specificity" evidence="1">
    <location>
        <position position="111"/>
    </location>
</feature>
<feature type="site" description="Important for substrate specificity" evidence="1">
    <location>
        <position position="192"/>
    </location>
</feature>
<protein>
    <recommendedName>
        <fullName evidence="1">Homoserine O-succinyltransferase</fullName>
        <shortName evidence="1">HST</shortName>
        <ecNumber evidence="1">2.3.1.46</ecNumber>
    </recommendedName>
    <alternativeName>
        <fullName evidence="1">Homoserine transsuccinylase</fullName>
        <shortName evidence="1">HTS</shortName>
    </alternativeName>
</protein>
<reference key="1">
    <citation type="submission" date="2007-09" db="EMBL/GenBank/DDBJ databases">
        <title>Complete sequence of chromosome of Serratia proteamaculans 568.</title>
        <authorList>
            <consortium name="US DOE Joint Genome Institute"/>
            <person name="Copeland A."/>
            <person name="Lucas S."/>
            <person name="Lapidus A."/>
            <person name="Barry K."/>
            <person name="Glavina del Rio T."/>
            <person name="Dalin E."/>
            <person name="Tice H."/>
            <person name="Pitluck S."/>
            <person name="Chain P."/>
            <person name="Malfatti S."/>
            <person name="Shin M."/>
            <person name="Vergez L."/>
            <person name="Schmutz J."/>
            <person name="Larimer F."/>
            <person name="Land M."/>
            <person name="Hauser L."/>
            <person name="Kyrpides N."/>
            <person name="Kim E."/>
            <person name="Taghavi S."/>
            <person name="Newman L."/>
            <person name="Vangronsveld J."/>
            <person name="van der Lelie D."/>
            <person name="Richardson P."/>
        </authorList>
    </citation>
    <scope>NUCLEOTIDE SEQUENCE [LARGE SCALE GENOMIC DNA]</scope>
    <source>
        <strain>568</strain>
    </source>
</reference>
<comment type="function">
    <text evidence="1">Transfers a succinyl group from succinyl-CoA to L-homoserine, forming succinyl-L-homoserine.</text>
</comment>
<comment type="catalytic activity">
    <reaction evidence="1">
        <text>L-homoserine + succinyl-CoA = O-succinyl-L-homoserine + CoA</text>
        <dbReference type="Rhea" id="RHEA:22008"/>
        <dbReference type="ChEBI" id="CHEBI:57287"/>
        <dbReference type="ChEBI" id="CHEBI:57292"/>
        <dbReference type="ChEBI" id="CHEBI:57476"/>
        <dbReference type="ChEBI" id="CHEBI:57661"/>
        <dbReference type="EC" id="2.3.1.46"/>
    </reaction>
</comment>
<comment type="pathway">
    <text evidence="1">Amino-acid biosynthesis; L-methionine biosynthesis via de novo pathway; O-succinyl-L-homoserine from L-homoserine: step 1/1.</text>
</comment>
<comment type="subcellular location">
    <subcellularLocation>
        <location evidence="1">Cytoplasm</location>
    </subcellularLocation>
</comment>
<comment type="similarity">
    <text evidence="1">Belongs to the MetA family.</text>
</comment>
<keyword id="KW-0012">Acyltransferase</keyword>
<keyword id="KW-0028">Amino-acid biosynthesis</keyword>
<keyword id="KW-0963">Cytoplasm</keyword>
<keyword id="KW-0486">Methionine biosynthesis</keyword>
<keyword id="KW-0808">Transferase</keyword>
<gene>
    <name evidence="1" type="primary">metAS</name>
    <name type="ordered locus">Spro_4504</name>
</gene>
<proteinExistence type="inferred from homology"/>
<accession>A8GKF8</accession>
<name>METAS_SERP5</name>
<organism>
    <name type="scientific">Serratia proteamaculans (strain 568)</name>
    <dbReference type="NCBI Taxonomy" id="399741"/>
    <lineage>
        <taxon>Bacteria</taxon>
        <taxon>Pseudomonadati</taxon>
        <taxon>Pseudomonadota</taxon>
        <taxon>Gammaproteobacteria</taxon>
        <taxon>Enterobacterales</taxon>
        <taxon>Yersiniaceae</taxon>
        <taxon>Serratia</taxon>
    </lineage>
</organism>
<evidence type="ECO:0000255" key="1">
    <source>
        <dbReference type="HAMAP-Rule" id="MF_00295"/>
    </source>
</evidence>